<protein>
    <recommendedName>
        <fullName evidence="1">Small ribosomal subunit protein uS19</fullName>
    </recommendedName>
    <alternativeName>
        <fullName evidence="2">30S ribosomal protein S19</fullName>
    </alternativeName>
</protein>
<proteinExistence type="inferred from homology"/>
<accession>Q73F92</accession>
<dbReference type="EMBL" id="AE017194">
    <property type="protein sequence ID" value="AAS39050.1"/>
    <property type="molecule type" value="Genomic_DNA"/>
</dbReference>
<dbReference type="SMR" id="Q73F92"/>
<dbReference type="KEGG" id="bca:BCE_0114"/>
<dbReference type="HOGENOM" id="CLU_144911_0_1_9"/>
<dbReference type="Proteomes" id="UP000002527">
    <property type="component" value="Chromosome"/>
</dbReference>
<dbReference type="GO" id="GO:0005737">
    <property type="term" value="C:cytoplasm"/>
    <property type="evidence" value="ECO:0007669"/>
    <property type="project" value="UniProtKB-ARBA"/>
</dbReference>
<dbReference type="GO" id="GO:0015935">
    <property type="term" value="C:small ribosomal subunit"/>
    <property type="evidence" value="ECO:0007669"/>
    <property type="project" value="InterPro"/>
</dbReference>
<dbReference type="GO" id="GO:0019843">
    <property type="term" value="F:rRNA binding"/>
    <property type="evidence" value="ECO:0007669"/>
    <property type="project" value="UniProtKB-UniRule"/>
</dbReference>
<dbReference type="GO" id="GO:0003735">
    <property type="term" value="F:structural constituent of ribosome"/>
    <property type="evidence" value="ECO:0007669"/>
    <property type="project" value="InterPro"/>
</dbReference>
<dbReference type="GO" id="GO:0000028">
    <property type="term" value="P:ribosomal small subunit assembly"/>
    <property type="evidence" value="ECO:0007669"/>
    <property type="project" value="TreeGrafter"/>
</dbReference>
<dbReference type="GO" id="GO:0006412">
    <property type="term" value="P:translation"/>
    <property type="evidence" value="ECO:0007669"/>
    <property type="project" value="UniProtKB-UniRule"/>
</dbReference>
<dbReference type="FunFam" id="3.30.860.10:FF:000001">
    <property type="entry name" value="30S ribosomal protein S19"/>
    <property type="match status" value="1"/>
</dbReference>
<dbReference type="Gene3D" id="3.30.860.10">
    <property type="entry name" value="30s Ribosomal Protein S19, Chain A"/>
    <property type="match status" value="1"/>
</dbReference>
<dbReference type="HAMAP" id="MF_00531">
    <property type="entry name" value="Ribosomal_uS19"/>
    <property type="match status" value="1"/>
</dbReference>
<dbReference type="InterPro" id="IPR002222">
    <property type="entry name" value="Ribosomal_uS19"/>
</dbReference>
<dbReference type="InterPro" id="IPR005732">
    <property type="entry name" value="Ribosomal_uS19_bac-type"/>
</dbReference>
<dbReference type="InterPro" id="IPR020934">
    <property type="entry name" value="Ribosomal_uS19_CS"/>
</dbReference>
<dbReference type="InterPro" id="IPR023575">
    <property type="entry name" value="Ribosomal_uS19_SF"/>
</dbReference>
<dbReference type="NCBIfam" id="TIGR01050">
    <property type="entry name" value="rpsS_bact"/>
    <property type="match status" value="1"/>
</dbReference>
<dbReference type="PANTHER" id="PTHR11880">
    <property type="entry name" value="RIBOSOMAL PROTEIN S19P FAMILY MEMBER"/>
    <property type="match status" value="1"/>
</dbReference>
<dbReference type="PANTHER" id="PTHR11880:SF8">
    <property type="entry name" value="SMALL RIBOSOMAL SUBUNIT PROTEIN US19M"/>
    <property type="match status" value="1"/>
</dbReference>
<dbReference type="Pfam" id="PF00203">
    <property type="entry name" value="Ribosomal_S19"/>
    <property type="match status" value="1"/>
</dbReference>
<dbReference type="PIRSF" id="PIRSF002144">
    <property type="entry name" value="Ribosomal_S19"/>
    <property type="match status" value="1"/>
</dbReference>
<dbReference type="PRINTS" id="PR00975">
    <property type="entry name" value="RIBOSOMALS19"/>
</dbReference>
<dbReference type="SUPFAM" id="SSF54570">
    <property type="entry name" value="Ribosomal protein S19"/>
    <property type="match status" value="1"/>
</dbReference>
<dbReference type="PROSITE" id="PS00323">
    <property type="entry name" value="RIBOSOMAL_S19"/>
    <property type="match status" value="1"/>
</dbReference>
<name>RS19_BACC1</name>
<feature type="chain" id="PRO_0000129772" description="Small ribosomal subunit protein uS19">
    <location>
        <begin position="1"/>
        <end position="92"/>
    </location>
</feature>
<comment type="function">
    <text evidence="1">Protein S19 forms a complex with S13 that binds strongly to the 16S ribosomal RNA.</text>
</comment>
<comment type="similarity">
    <text evidence="1">Belongs to the universal ribosomal protein uS19 family.</text>
</comment>
<evidence type="ECO:0000255" key="1">
    <source>
        <dbReference type="HAMAP-Rule" id="MF_00531"/>
    </source>
</evidence>
<evidence type="ECO:0000305" key="2"/>
<sequence length="92" mass="10627">MARSLKKGPFVDDHLMSKIAKLNETEQKQVVKTWSRRSTIFPQFIGHTIAVYDGRKHVPVYVTEDMVGHKLGEFAPTRTYKGHDADDKKTRR</sequence>
<reference key="1">
    <citation type="journal article" date="2004" name="Nucleic Acids Res.">
        <title>The genome sequence of Bacillus cereus ATCC 10987 reveals metabolic adaptations and a large plasmid related to Bacillus anthracis pXO1.</title>
        <authorList>
            <person name="Rasko D.A."/>
            <person name="Ravel J."/>
            <person name="Oekstad O.A."/>
            <person name="Helgason E."/>
            <person name="Cer R.Z."/>
            <person name="Jiang L."/>
            <person name="Shores K.A."/>
            <person name="Fouts D.E."/>
            <person name="Tourasse N.J."/>
            <person name="Angiuoli S.V."/>
            <person name="Kolonay J.F."/>
            <person name="Nelson W.C."/>
            <person name="Kolstoe A.-B."/>
            <person name="Fraser C.M."/>
            <person name="Read T.D."/>
        </authorList>
    </citation>
    <scope>NUCLEOTIDE SEQUENCE [LARGE SCALE GENOMIC DNA]</scope>
    <source>
        <strain>ATCC 10987 / NRS 248</strain>
    </source>
</reference>
<organism>
    <name type="scientific">Bacillus cereus (strain ATCC 10987 / NRS 248)</name>
    <dbReference type="NCBI Taxonomy" id="222523"/>
    <lineage>
        <taxon>Bacteria</taxon>
        <taxon>Bacillati</taxon>
        <taxon>Bacillota</taxon>
        <taxon>Bacilli</taxon>
        <taxon>Bacillales</taxon>
        <taxon>Bacillaceae</taxon>
        <taxon>Bacillus</taxon>
        <taxon>Bacillus cereus group</taxon>
    </lineage>
</organism>
<gene>
    <name evidence="1" type="primary">rpsS</name>
    <name type="ordered locus">BCE_0114</name>
</gene>
<keyword id="KW-0687">Ribonucleoprotein</keyword>
<keyword id="KW-0689">Ribosomal protein</keyword>
<keyword id="KW-0694">RNA-binding</keyword>
<keyword id="KW-0699">rRNA-binding</keyword>